<keyword id="KW-0175">Coiled coil</keyword>
<keyword id="KW-0433">Leucine-rich repeat</keyword>
<keyword id="KW-1185">Reference proteome</keyword>
<keyword id="KW-0677">Repeat</keyword>
<name>CCDC7_MOUSE</name>
<gene>
    <name evidence="6" type="primary">Ccdc7a</name>
    <name evidence="4" type="synonym">Biot2</name>
    <name evidence="6" type="synonym">Ccdc7</name>
</gene>
<dbReference type="EMBL" id="AY854152">
    <property type="protein sequence ID" value="AAX47309.1"/>
    <property type="molecule type" value="mRNA"/>
</dbReference>
<dbReference type="EMBL" id="AK015811">
    <property type="protein sequence ID" value="BAB29987.1"/>
    <property type="molecule type" value="mRNA"/>
</dbReference>
<dbReference type="EMBL" id="AC104928">
    <property type="status" value="NOT_ANNOTATED_CDS"/>
    <property type="molecule type" value="Genomic_DNA"/>
</dbReference>
<dbReference type="EMBL" id="AC148114">
    <property type="status" value="NOT_ANNOTATED_CDS"/>
    <property type="molecule type" value="Genomic_DNA"/>
</dbReference>
<dbReference type="EMBL" id="CH466525">
    <property type="protein sequence ID" value="EDL11834.1"/>
    <property type="molecule type" value="Genomic_DNA"/>
</dbReference>
<dbReference type="CCDS" id="CCDS40524.1"/>
<dbReference type="SMR" id="Q9D541"/>
<dbReference type="STRING" id="10090.ENSMUSP00000092780"/>
<dbReference type="GlyGen" id="Q9D541">
    <property type="glycosylation" value="2 sites, 1 N-linked glycan (1 site)"/>
</dbReference>
<dbReference type="iPTMnet" id="Q9D541"/>
<dbReference type="PhosphoSitePlus" id="Q9D541"/>
<dbReference type="PaxDb" id="10090-ENSMUSP00000092780"/>
<dbReference type="ProteomicsDB" id="302425"/>
<dbReference type="DNASU" id="74703"/>
<dbReference type="Ensembl" id="ENSMUST00000095158.11">
    <property type="protein sequence ID" value="ENSMUSP00000092780.5"/>
    <property type="gene ID" value="ENSMUSG00000025808.18"/>
</dbReference>
<dbReference type="GeneID" id="74703"/>
<dbReference type="KEGG" id="mmu:74703"/>
<dbReference type="UCSC" id="uc009nzy.2">
    <property type="organism name" value="mouse"/>
</dbReference>
<dbReference type="AGR" id="MGI:1921953"/>
<dbReference type="CTD" id="74703"/>
<dbReference type="MGI" id="MGI:1921953">
    <property type="gene designation" value="Ccdc7a"/>
</dbReference>
<dbReference type="VEuPathDB" id="HostDB:ENSMUSG00000025808"/>
<dbReference type="eggNOG" id="ENOG502S48H">
    <property type="taxonomic scope" value="Eukaryota"/>
</dbReference>
<dbReference type="GeneTree" id="ENSGT00390000009751"/>
<dbReference type="InParanoid" id="Q9D541"/>
<dbReference type="OrthoDB" id="84557at9989"/>
<dbReference type="PhylomeDB" id="Q9D541"/>
<dbReference type="TreeFam" id="TF337205"/>
<dbReference type="BioGRID-ORCS" id="74703">
    <property type="hits" value="2 hits in 45 CRISPR screens"/>
</dbReference>
<dbReference type="ChiTaRS" id="Ccdc7a">
    <property type="organism name" value="mouse"/>
</dbReference>
<dbReference type="PRO" id="PR:Q9D541"/>
<dbReference type="Proteomes" id="UP000000589">
    <property type="component" value="Chromosome 8"/>
</dbReference>
<dbReference type="RNAct" id="Q9D541">
    <property type="molecule type" value="protein"/>
</dbReference>
<dbReference type="Bgee" id="ENSMUSG00000025808">
    <property type="expression patterns" value="Expressed in spermatid and 38 other cell types or tissues"/>
</dbReference>
<dbReference type="ExpressionAtlas" id="Q9D541">
    <property type="expression patterns" value="baseline and differential"/>
</dbReference>
<dbReference type="InterPro" id="IPR029272">
    <property type="entry name" value="CCDC7"/>
</dbReference>
<dbReference type="PANTHER" id="PTHR22035">
    <property type="entry name" value="COILED-COIL DOMAIN-CONTAINING PROTEIN 7"/>
    <property type="match status" value="1"/>
</dbReference>
<dbReference type="PANTHER" id="PTHR22035:SF5">
    <property type="entry name" value="COILED-COIL DOMAIN-CONTAINING PROTEIN 7"/>
    <property type="match status" value="1"/>
</dbReference>
<dbReference type="Pfam" id="PF15368">
    <property type="entry name" value="BioT2"/>
    <property type="match status" value="1"/>
</dbReference>
<organism>
    <name type="scientific">Mus musculus</name>
    <name type="common">Mouse</name>
    <dbReference type="NCBI Taxonomy" id="10090"/>
    <lineage>
        <taxon>Eukaryota</taxon>
        <taxon>Metazoa</taxon>
        <taxon>Chordata</taxon>
        <taxon>Craniata</taxon>
        <taxon>Vertebrata</taxon>
        <taxon>Euteleostomi</taxon>
        <taxon>Mammalia</taxon>
        <taxon>Eutheria</taxon>
        <taxon>Euarchontoglires</taxon>
        <taxon>Glires</taxon>
        <taxon>Rodentia</taxon>
        <taxon>Myomorpha</taxon>
        <taxon>Muroidea</taxon>
        <taxon>Muridae</taxon>
        <taxon>Murinae</taxon>
        <taxon>Mus</taxon>
        <taxon>Mus</taxon>
    </lineage>
</organism>
<comment type="tissue specificity">
    <text evidence="3">Exclusively expressed in the testes.</text>
</comment>
<comment type="miscellaneous">
    <text evidence="3">Oncogene that drives tumor growth via increasing proliteration and cell survival.</text>
</comment>
<accession>Q9D541</accession>
<accession>A0A1L1SS82</accession>
<accession>D3YY17</accession>
<reference key="1">
    <citation type="journal article" date="2009" name="Cell. Mol. Biol. Lett.">
        <title>RNA interference against Biot2, a novel mouse testis-specific gene, inhibits the growth of tumor cells.</title>
        <authorList>
            <person name="Wang C.T."/>
            <person name="Zhang P."/>
            <person name="Wang Y.S."/>
            <person name="Ruan X.Z."/>
            <person name="Li Z.Y."/>
            <person name="Peng F."/>
            <person name="Yang H.S."/>
            <person name="Wei Y.Q."/>
        </authorList>
    </citation>
    <scope>NUCLEOTIDE SEQUENCE [MRNA]</scope>
    <scope>TISSUE SPECIFICITY</scope>
</reference>
<reference key="2">
    <citation type="journal article" date="2005" name="Science">
        <title>The transcriptional landscape of the mammalian genome.</title>
        <authorList>
            <person name="Carninci P."/>
            <person name="Kasukawa T."/>
            <person name="Katayama S."/>
            <person name="Gough J."/>
            <person name="Frith M.C."/>
            <person name="Maeda N."/>
            <person name="Oyama R."/>
            <person name="Ravasi T."/>
            <person name="Lenhard B."/>
            <person name="Wells C."/>
            <person name="Kodzius R."/>
            <person name="Shimokawa K."/>
            <person name="Bajic V.B."/>
            <person name="Brenner S.E."/>
            <person name="Batalov S."/>
            <person name="Forrest A.R."/>
            <person name="Zavolan M."/>
            <person name="Davis M.J."/>
            <person name="Wilming L.G."/>
            <person name="Aidinis V."/>
            <person name="Allen J.E."/>
            <person name="Ambesi-Impiombato A."/>
            <person name="Apweiler R."/>
            <person name="Aturaliya R.N."/>
            <person name="Bailey T.L."/>
            <person name="Bansal M."/>
            <person name="Baxter L."/>
            <person name="Beisel K.W."/>
            <person name="Bersano T."/>
            <person name="Bono H."/>
            <person name="Chalk A.M."/>
            <person name="Chiu K.P."/>
            <person name="Choudhary V."/>
            <person name="Christoffels A."/>
            <person name="Clutterbuck D.R."/>
            <person name="Crowe M.L."/>
            <person name="Dalla E."/>
            <person name="Dalrymple B.P."/>
            <person name="de Bono B."/>
            <person name="Della Gatta G."/>
            <person name="di Bernardo D."/>
            <person name="Down T."/>
            <person name="Engstrom P."/>
            <person name="Fagiolini M."/>
            <person name="Faulkner G."/>
            <person name="Fletcher C.F."/>
            <person name="Fukushima T."/>
            <person name="Furuno M."/>
            <person name="Futaki S."/>
            <person name="Gariboldi M."/>
            <person name="Georgii-Hemming P."/>
            <person name="Gingeras T.R."/>
            <person name="Gojobori T."/>
            <person name="Green R.E."/>
            <person name="Gustincich S."/>
            <person name="Harbers M."/>
            <person name="Hayashi Y."/>
            <person name="Hensch T.K."/>
            <person name="Hirokawa N."/>
            <person name="Hill D."/>
            <person name="Huminiecki L."/>
            <person name="Iacono M."/>
            <person name="Ikeo K."/>
            <person name="Iwama A."/>
            <person name="Ishikawa T."/>
            <person name="Jakt M."/>
            <person name="Kanapin A."/>
            <person name="Katoh M."/>
            <person name="Kawasawa Y."/>
            <person name="Kelso J."/>
            <person name="Kitamura H."/>
            <person name="Kitano H."/>
            <person name="Kollias G."/>
            <person name="Krishnan S.P."/>
            <person name="Kruger A."/>
            <person name="Kummerfeld S.K."/>
            <person name="Kurochkin I.V."/>
            <person name="Lareau L.F."/>
            <person name="Lazarevic D."/>
            <person name="Lipovich L."/>
            <person name="Liu J."/>
            <person name="Liuni S."/>
            <person name="McWilliam S."/>
            <person name="Madan Babu M."/>
            <person name="Madera M."/>
            <person name="Marchionni L."/>
            <person name="Matsuda H."/>
            <person name="Matsuzawa S."/>
            <person name="Miki H."/>
            <person name="Mignone F."/>
            <person name="Miyake S."/>
            <person name="Morris K."/>
            <person name="Mottagui-Tabar S."/>
            <person name="Mulder N."/>
            <person name="Nakano N."/>
            <person name="Nakauchi H."/>
            <person name="Ng P."/>
            <person name="Nilsson R."/>
            <person name="Nishiguchi S."/>
            <person name="Nishikawa S."/>
            <person name="Nori F."/>
            <person name="Ohara O."/>
            <person name="Okazaki Y."/>
            <person name="Orlando V."/>
            <person name="Pang K.C."/>
            <person name="Pavan W.J."/>
            <person name="Pavesi G."/>
            <person name="Pesole G."/>
            <person name="Petrovsky N."/>
            <person name="Piazza S."/>
            <person name="Reed J."/>
            <person name="Reid J.F."/>
            <person name="Ring B.Z."/>
            <person name="Ringwald M."/>
            <person name="Rost B."/>
            <person name="Ruan Y."/>
            <person name="Salzberg S.L."/>
            <person name="Sandelin A."/>
            <person name="Schneider C."/>
            <person name="Schoenbach C."/>
            <person name="Sekiguchi K."/>
            <person name="Semple C.A."/>
            <person name="Seno S."/>
            <person name="Sessa L."/>
            <person name="Sheng Y."/>
            <person name="Shibata Y."/>
            <person name="Shimada H."/>
            <person name="Shimada K."/>
            <person name="Silva D."/>
            <person name="Sinclair B."/>
            <person name="Sperling S."/>
            <person name="Stupka E."/>
            <person name="Sugiura K."/>
            <person name="Sultana R."/>
            <person name="Takenaka Y."/>
            <person name="Taki K."/>
            <person name="Tammoja K."/>
            <person name="Tan S.L."/>
            <person name="Tang S."/>
            <person name="Taylor M.S."/>
            <person name="Tegner J."/>
            <person name="Teichmann S.A."/>
            <person name="Ueda H.R."/>
            <person name="van Nimwegen E."/>
            <person name="Verardo R."/>
            <person name="Wei C.L."/>
            <person name="Yagi K."/>
            <person name="Yamanishi H."/>
            <person name="Zabarovsky E."/>
            <person name="Zhu S."/>
            <person name="Zimmer A."/>
            <person name="Hide W."/>
            <person name="Bult C."/>
            <person name="Grimmond S.M."/>
            <person name="Teasdale R.D."/>
            <person name="Liu E.T."/>
            <person name="Brusic V."/>
            <person name="Quackenbush J."/>
            <person name="Wahlestedt C."/>
            <person name="Mattick J.S."/>
            <person name="Hume D.A."/>
            <person name="Kai C."/>
            <person name="Sasaki D."/>
            <person name="Tomaru Y."/>
            <person name="Fukuda S."/>
            <person name="Kanamori-Katayama M."/>
            <person name="Suzuki M."/>
            <person name="Aoki J."/>
            <person name="Arakawa T."/>
            <person name="Iida J."/>
            <person name="Imamura K."/>
            <person name="Itoh M."/>
            <person name="Kato T."/>
            <person name="Kawaji H."/>
            <person name="Kawagashira N."/>
            <person name="Kawashima T."/>
            <person name="Kojima M."/>
            <person name="Kondo S."/>
            <person name="Konno H."/>
            <person name="Nakano K."/>
            <person name="Ninomiya N."/>
            <person name="Nishio T."/>
            <person name="Okada M."/>
            <person name="Plessy C."/>
            <person name="Shibata K."/>
            <person name="Shiraki T."/>
            <person name="Suzuki S."/>
            <person name="Tagami M."/>
            <person name="Waki K."/>
            <person name="Watahiki A."/>
            <person name="Okamura-Oho Y."/>
            <person name="Suzuki H."/>
            <person name="Kawai J."/>
            <person name="Hayashizaki Y."/>
        </authorList>
    </citation>
    <scope>NUCLEOTIDE SEQUENCE [LARGE SCALE MRNA]</scope>
</reference>
<reference key="3">
    <citation type="journal article" date="2009" name="PLoS Biol.">
        <title>Lineage-specific biology revealed by a finished genome assembly of the mouse.</title>
        <authorList>
            <person name="Church D.M."/>
            <person name="Goodstadt L."/>
            <person name="Hillier L.W."/>
            <person name="Zody M.C."/>
            <person name="Goldstein S."/>
            <person name="She X."/>
            <person name="Bult C.J."/>
            <person name="Agarwala R."/>
            <person name="Cherry J.L."/>
            <person name="DiCuccio M."/>
            <person name="Hlavina W."/>
            <person name="Kapustin Y."/>
            <person name="Meric P."/>
            <person name="Maglott D."/>
            <person name="Birtle Z."/>
            <person name="Marques A.C."/>
            <person name="Graves T."/>
            <person name="Zhou S."/>
            <person name="Teague B."/>
            <person name="Potamousis K."/>
            <person name="Churas C."/>
            <person name="Place M."/>
            <person name="Herschleb J."/>
            <person name="Runnheim R."/>
            <person name="Forrest D."/>
            <person name="Amos-Landgraf J."/>
            <person name="Schwartz D.C."/>
            <person name="Cheng Z."/>
            <person name="Lindblad-Toh K."/>
            <person name="Eichler E.E."/>
            <person name="Ponting C.P."/>
        </authorList>
    </citation>
    <scope>NUCLEOTIDE SEQUENCE [LARGE SCALE GENOMIC DNA]</scope>
    <source>
        <strain>C57BL/6J</strain>
    </source>
</reference>
<reference key="4">
    <citation type="submission" date="2005-07" db="EMBL/GenBank/DDBJ databases">
        <authorList>
            <person name="Mural R.J."/>
            <person name="Adams M.D."/>
            <person name="Myers E.W."/>
            <person name="Smith H.O."/>
            <person name="Venter J.C."/>
        </authorList>
    </citation>
    <scope>NUCLEOTIDE SEQUENCE [LARGE SCALE GENOMIC DNA]</scope>
</reference>
<reference key="5">
    <citation type="journal article" date="2011" name="PLoS Biol.">
        <title>Modernizing reference genome assemblies.</title>
        <authorList>
            <person name="Church D.M."/>
            <person name="Schneider V.A."/>
            <person name="Graves T."/>
            <person name="Auger K."/>
            <person name="Cunningham F."/>
            <person name="Bouk N."/>
            <person name="Chen H.C."/>
            <person name="Agarwala R."/>
            <person name="McLaren W.M."/>
            <person name="Ritchie G.R."/>
            <person name="Albracht D."/>
            <person name="Kremitzki M."/>
            <person name="Rock S."/>
            <person name="Kotkiewicz H."/>
            <person name="Kremitzki C."/>
            <person name="Wollam A."/>
            <person name="Trani L."/>
            <person name="Fulton L."/>
            <person name="Fulton R."/>
            <person name="Matthews L."/>
            <person name="Whitehead S."/>
            <person name="Chow W."/>
            <person name="Torrance J."/>
            <person name="Dunn M."/>
            <person name="Harden G."/>
            <person name="Threadgold G."/>
            <person name="Wood J."/>
            <person name="Collins J."/>
            <person name="Heath P."/>
            <person name="Griffiths G."/>
            <person name="Pelan S."/>
            <person name="Grafham D."/>
            <person name="Eichler E.E."/>
            <person name="Weinstock G."/>
            <person name="Mardis E.R."/>
            <person name="Wilson R.K."/>
            <person name="Howe K."/>
            <person name="Flicek P."/>
            <person name="Hubbard T."/>
        </authorList>
    </citation>
    <scope>NUCLEOTIDE SEQUENCE [LARGE SCALE GENOMIC DNA]</scope>
    <source>
        <strain>C57BL/6J</strain>
    </source>
</reference>
<evidence type="ECO:0000255" key="1"/>
<evidence type="ECO:0000256" key="2">
    <source>
        <dbReference type="SAM" id="MobiDB-lite"/>
    </source>
</evidence>
<evidence type="ECO:0000269" key="3">
    <source>
    </source>
</evidence>
<evidence type="ECO:0000303" key="4">
    <source>
    </source>
</evidence>
<evidence type="ECO:0000305" key="5"/>
<evidence type="ECO:0000312" key="6">
    <source>
        <dbReference type="MGI" id="MGI:1921953"/>
    </source>
</evidence>
<proteinExistence type="evidence at transcript level"/>
<feature type="chain" id="PRO_0000419668" description="Coiled-coil domain-containing protein 7A">
    <location>
        <begin position="1"/>
        <end position="1642"/>
    </location>
</feature>
<feature type="repeat" description="LRR 1" evidence="1">
    <location>
        <begin position="161"/>
        <end position="184"/>
    </location>
</feature>
<feature type="repeat" description="LRR 2" evidence="1">
    <location>
        <begin position="1310"/>
        <end position="1333"/>
    </location>
</feature>
<feature type="region of interest" description="Disordered" evidence="2">
    <location>
        <begin position="21"/>
        <end position="51"/>
    </location>
</feature>
<feature type="coiled-coil region" evidence="1">
    <location>
        <begin position="279"/>
        <end position="330"/>
    </location>
</feature>
<feature type="sequence conflict" description="In Ref. 1; AAX47309." evidence="5" ref="1">
    <original>NLSPNREFKSIEELLQIQKEAEL</original>
    <variation>YDMKICYLFIPQLVKMYLNHGLF</variation>
    <location>
        <begin position="349"/>
        <end position="371"/>
    </location>
</feature>
<sequence length="1642" mass="184939">MKCAKHPSTISMKLTSVPELPYKKGLLNSSPKPKEKHNAKSKYGKNESMVLRSPPTGESIVRFALPIPLSKTKDKISADEMVRRITTNLKMVVSNLEDTYGACYDNGEKAAEKSEAEGLSIGDDVSSFLLCCSQFTSQLEEAVKEECGALESLYKWFQQQVNQMEEISKDQSNLEELQSDGKTASLNIVQIAKLARKFEDFKSRLKTRKEVMQTKNEDKEIMAETLKHYGLMEKQIEEFITSHSALESQTETESQSGTPSVTTRMARMIKIFENQSTMLEKALNDQQTIESKYKQLETDFQMLIMEKTLLEAEIRRLREIERVKSAAKEEQTKKSGKSEKKKFKEKEKNLSPNREFKSIEELLQIQKEAELLKTEKKTLQGQLKWALEEAERNKTQLEFVLHQKMEMFKEESKTKVGQSQNKSKVKIEDSKDSLPKKSDTQLGGQRKDQISSDQSKRPKKKQLADIDPSAVEDFPPETFKSFTVMPLIEEHRESISSQPKEEMAKASEQSEAEDIEGPLEIPSESSNEDDDLLPEDESPMMEQVTDVGRYKSIYISAEPIDTMSLISRTQSEMETLEAINYDNVLNEGEEQDKKIGKDSDTGRKSKRKRSSKIRKLSTHEEESDIVHYEEATKAKVPSKKRASDPYGDEAYESRGSVSKAQTYTKKQGTHQRGRGSASDAYGDEAYESRGSISKAQTYTRKQGTHQRGRGSVQEEESDTVHYEEVTRAKVPSKKQASDPYGDEAYESQGSVSKAHTHTKKQGTHQRGRGSVHEEESDTMNYEVPRKSKISSRRKGFALPITHQVEMHSSESQGSISKSNTETKKQGTHKRGRDSDADGARTPVSQGSDSKADTERKKHRSKEESTISKDSIPVLDEVQDKTFEHQESGLRLEVQAKKLTFSSQNIHNEESATDIKVEYQNVPSSSQVQLKKQKPLGGEIFTTHFVVPAESHAQLYQTHTPETQIERGTTSGTARLTTIPVEHPKKEASPDNLFPEKKLYITRAPTQTKKQYPPWDAKAETQKKTVKEVQGISEPQTKLNPTMSGIILHLDMDRVVETDLENLEETIVPHVLRSELEIGTDAKNMPETPTSREAVRTEAKGNQDVTISIAKGMKLIGKLKDQHGLSSFASKDTISPGKSLIKSSRDNQDDSLLETKPQENTSDKYHPSKTFPTKVINMLPFSEKSLGSTSANVDVAPKPVYRASRGRSRISKALQQLLKTSEHLKPTSTKNQNADLEKHLYISVRSANKHTQKDKKHGQSNNQKLKKQGALSSTKKQKHKEQPKTETIVENNDKFDDNLMMTTSSPNIKIIKELSKTLNLDGGDIELSDFVFKTASAAKKLENKGPSKTKNLNKESSRDIHILHLTTSAIRTLLLDEEAKIRSLEKKLMKQSTILQKSVSSMKKFMFEEPSRETKMKRKKREKRKIVVKSPHILPITTTQKHTIKEKSEISNLEKPIVRGTDILKKSTSARKKRVLKGKSKSATLPKKCDNFPFDLVRSSSDSSKQEVEEQPKPGNVDKKVSDDSYSPDISTTPTKKHTLKGQSKSRTIYEKGVDLPNNLVLSKSASSIQEFEEQPQPGNVDKKVSDDSYSPDISTSPTKKHTLKGQPKSENSDEKGIKRPNNLHMSASVARKRLLKALSTIP</sequence>
<protein>
    <recommendedName>
        <fullName evidence="6">Coiled-coil domain-containing protein 7A</fullName>
    </recommendedName>
    <alternativeName>
        <fullName evidence="4">Protein BIOT2</fullName>
    </alternativeName>
</protein>